<organism>
    <name type="scientific">Sinorhizobium fredii (strain NBRC 101917 / NGR234)</name>
    <dbReference type="NCBI Taxonomy" id="394"/>
    <lineage>
        <taxon>Bacteria</taxon>
        <taxon>Pseudomonadati</taxon>
        <taxon>Pseudomonadota</taxon>
        <taxon>Alphaproteobacteria</taxon>
        <taxon>Hyphomicrobiales</taxon>
        <taxon>Rhizobiaceae</taxon>
        <taxon>Sinorhizobium/Ensifer group</taxon>
        <taxon>Sinorhizobium</taxon>
    </lineage>
</organism>
<comment type="function">
    <text evidence="1">Key component of the proton channel; it plays a direct role in the translocation of protons across the membrane.</text>
</comment>
<comment type="subunit">
    <text evidence="1">F-type ATPases have 2 components, CF(1) - the catalytic core - and CF(0) - the membrane proton channel. CF(1) has five subunits: alpha(3), beta(3), gamma(1), delta(1), epsilon(1). CF(0) has three main subunits: a(1), b(2) and c(9-12). The alpha and beta chains form an alternating ring which encloses part of the gamma chain. CF(1) is attached to CF(0) by a central stalk formed by the gamma and epsilon chains, while a peripheral stalk is formed by the delta and b chains.</text>
</comment>
<comment type="subcellular location">
    <subcellularLocation>
        <location evidence="1">Cell inner membrane</location>
        <topology evidence="1">Multi-pass membrane protein</topology>
    </subcellularLocation>
</comment>
<comment type="similarity">
    <text evidence="1">Belongs to the ATPase A chain family.</text>
</comment>
<gene>
    <name evidence="1" type="primary">atpB</name>
    <name type="ordered locus">NGR_c04470</name>
</gene>
<accession>C3MHB5</accession>
<keyword id="KW-0066">ATP synthesis</keyword>
<keyword id="KW-0997">Cell inner membrane</keyword>
<keyword id="KW-1003">Cell membrane</keyword>
<keyword id="KW-0138">CF(0)</keyword>
<keyword id="KW-0375">Hydrogen ion transport</keyword>
<keyword id="KW-0406">Ion transport</keyword>
<keyword id="KW-0472">Membrane</keyword>
<keyword id="KW-1185">Reference proteome</keyword>
<keyword id="KW-0812">Transmembrane</keyword>
<keyword id="KW-1133">Transmembrane helix</keyword>
<keyword id="KW-0813">Transport</keyword>
<proteinExistence type="inferred from homology"/>
<feature type="chain" id="PRO_1000184287" description="ATP synthase subunit a">
    <location>
        <begin position="1"/>
        <end position="250"/>
    </location>
</feature>
<feature type="transmembrane region" description="Helical" evidence="1">
    <location>
        <begin position="26"/>
        <end position="46"/>
    </location>
</feature>
<feature type="transmembrane region" description="Helical" evidence="1">
    <location>
        <begin position="84"/>
        <end position="104"/>
    </location>
</feature>
<feature type="transmembrane region" description="Helical" evidence="1">
    <location>
        <begin position="114"/>
        <end position="134"/>
    </location>
</feature>
<feature type="transmembrane region" description="Helical" evidence="1">
    <location>
        <begin position="143"/>
        <end position="163"/>
    </location>
</feature>
<feature type="transmembrane region" description="Helical" evidence="1">
    <location>
        <begin position="193"/>
        <end position="213"/>
    </location>
</feature>
<feature type="transmembrane region" description="Helical" evidence="1">
    <location>
        <begin position="216"/>
        <end position="236"/>
    </location>
</feature>
<name>ATP6_SINFN</name>
<protein>
    <recommendedName>
        <fullName evidence="1">ATP synthase subunit a</fullName>
    </recommendedName>
    <alternativeName>
        <fullName evidence="1">ATP synthase F0 sector subunit a</fullName>
    </alternativeName>
    <alternativeName>
        <fullName evidence="1">F-ATPase subunit 6</fullName>
    </alternativeName>
</protein>
<evidence type="ECO:0000255" key="1">
    <source>
        <dbReference type="HAMAP-Rule" id="MF_01393"/>
    </source>
</evidence>
<reference key="1">
    <citation type="journal article" date="2009" name="Appl. Environ. Microbiol.">
        <title>Rhizobium sp. strain NGR234 possesses a remarkable number of secretion systems.</title>
        <authorList>
            <person name="Schmeisser C."/>
            <person name="Liesegang H."/>
            <person name="Krysciak D."/>
            <person name="Bakkou N."/>
            <person name="Le Quere A."/>
            <person name="Wollherr A."/>
            <person name="Heinemeyer I."/>
            <person name="Morgenstern B."/>
            <person name="Pommerening-Roeser A."/>
            <person name="Flores M."/>
            <person name="Palacios R."/>
            <person name="Brenner S."/>
            <person name="Gottschalk G."/>
            <person name="Schmitz R.A."/>
            <person name="Broughton W.J."/>
            <person name="Perret X."/>
            <person name="Strittmatter A.W."/>
            <person name="Streit W.R."/>
        </authorList>
    </citation>
    <scope>NUCLEOTIDE SEQUENCE [LARGE SCALE GENOMIC DNA]</scope>
    <source>
        <strain>NBRC 101917 / NGR234</strain>
    </source>
</reference>
<dbReference type="EMBL" id="CP001389">
    <property type="protein sequence ID" value="ACP24243.1"/>
    <property type="molecule type" value="Genomic_DNA"/>
</dbReference>
<dbReference type="RefSeq" id="WP_012707028.1">
    <property type="nucleotide sequence ID" value="NC_012587.1"/>
</dbReference>
<dbReference type="RefSeq" id="YP_002824996.1">
    <property type="nucleotide sequence ID" value="NC_012587.1"/>
</dbReference>
<dbReference type="SMR" id="C3MHB5"/>
<dbReference type="STRING" id="394.NGR_c04470"/>
<dbReference type="KEGG" id="rhi:NGR_c04470"/>
<dbReference type="PATRIC" id="fig|394.7.peg.3254"/>
<dbReference type="eggNOG" id="COG0356">
    <property type="taxonomic scope" value="Bacteria"/>
</dbReference>
<dbReference type="HOGENOM" id="CLU_041018_0_2_5"/>
<dbReference type="OrthoDB" id="9809130at2"/>
<dbReference type="Proteomes" id="UP000001054">
    <property type="component" value="Chromosome"/>
</dbReference>
<dbReference type="GO" id="GO:0005886">
    <property type="term" value="C:plasma membrane"/>
    <property type="evidence" value="ECO:0007669"/>
    <property type="project" value="UniProtKB-SubCell"/>
</dbReference>
<dbReference type="GO" id="GO:0045259">
    <property type="term" value="C:proton-transporting ATP synthase complex"/>
    <property type="evidence" value="ECO:0007669"/>
    <property type="project" value="UniProtKB-KW"/>
</dbReference>
<dbReference type="GO" id="GO:0046933">
    <property type="term" value="F:proton-transporting ATP synthase activity, rotational mechanism"/>
    <property type="evidence" value="ECO:0007669"/>
    <property type="project" value="UniProtKB-UniRule"/>
</dbReference>
<dbReference type="CDD" id="cd00310">
    <property type="entry name" value="ATP-synt_Fo_a_6"/>
    <property type="match status" value="1"/>
</dbReference>
<dbReference type="FunFam" id="1.20.120.220:FF:000003">
    <property type="entry name" value="ATP synthase subunit a"/>
    <property type="match status" value="1"/>
</dbReference>
<dbReference type="Gene3D" id="1.20.120.220">
    <property type="entry name" value="ATP synthase, F0 complex, subunit A"/>
    <property type="match status" value="1"/>
</dbReference>
<dbReference type="HAMAP" id="MF_01393">
    <property type="entry name" value="ATP_synth_a_bact"/>
    <property type="match status" value="1"/>
</dbReference>
<dbReference type="InterPro" id="IPR000568">
    <property type="entry name" value="ATP_synth_F0_asu"/>
</dbReference>
<dbReference type="InterPro" id="IPR023011">
    <property type="entry name" value="ATP_synth_F0_asu_AS"/>
</dbReference>
<dbReference type="InterPro" id="IPR045083">
    <property type="entry name" value="ATP_synth_F0_asu_bact/mt"/>
</dbReference>
<dbReference type="InterPro" id="IPR035908">
    <property type="entry name" value="F0_ATP_A_sf"/>
</dbReference>
<dbReference type="NCBIfam" id="TIGR01131">
    <property type="entry name" value="ATP_synt_6_or_A"/>
    <property type="match status" value="1"/>
</dbReference>
<dbReference type="NCBIfam" id="NF004482">
    <property type="entry name" value="PRK05815.2-4"/>
    <property type="match status" value="1"/>
</dbReference>
<dbReference type="PANTHER" id="PTHR11410">
    <property type="entry name" value="ATP SYNTHASE SUBUNIT A"/>
    <property type="match status" value="1"/>
</dbReference>
<dbReference type="PANTHER" id="PTHR11410:SF0">
    <property type="entry name" value="ATP SYNTHASE SUBUNIT A"/>
    <property type="match status" value="1"/>
</dbReference>
<dbReference type="Pfam" id="PF00119">
    <property type="entry name" value="ATP-synt_A"/>
    <property type="match status" value="1"/>
</dbReference>
<dbReference type="PRINTS" id="PR00123">
    <property type="entry name" value="ATPASEA"/>
</dbReference>
<dbReference type="SUPFAM" id="SSF81336">
    <property type="entry name" value="F1F0 ATP synthase subunit A"/>
    <property type="match status" value="1"/>
</dbReference>
<dbReference type="PROSITE" id="PS00449">
    <property type="entry name" value="ATPASE_A"/>
    <property type="match status" value="1"/>
</dbReference>
<sequence>MSNDPTHQFLVNKIVPIEIGGIDFSFTNASLFMVATVGVAAGFLYLTTSQRGVIPTRMQSVSEVSYEFIASMLREGAGSHGMKFFPMVFSLFMFILTANLLGMFPYFFTVTSQIIVTFALAVFVIGTVILYGFYKHGFGFLKLFVPHGVPGALLPLVVSIEVISFLSRPISLSVRLFANMLAGHITLKVFAGFVASLSAFGALGIGGAILPLIMTVALTGLEFLVAFLQAYVFAVLTCMYLNDAVHPGSH</sequence>